<reference key="1">
    <citation type="submission" date="2007-05" db="EMBL/GenBank/DDBJ databases">
        <title>Complete sequence of chromosome of Acidiphilium cryptum JF-5.</title>
        <authorList>
            <consortium name="US DOE Joint Genome Institute"/>
            <person name="Copeland A."/>
            <person name="Lucas S."/>
            <person name="Lapidus A."/>
            <person name="Barry K."/>
            <person name="Detter J.C."/>
            <person name="Glavina del Rio T."/>
            <person name="Hammon N."/>
            <person name="Israni S."/>
            <person name="Dalin E."/>
            <person name="Tice H."/>
            <person name="Pitluck S."/>
            <person name="Sims D."/>
            <person name="Brettin T."/>
            <person name="Bruce D."/>
            <person name="Han C."/>
            <person name="Schmutz J."/>
            <person name="Larimer F."/>
            <person name="Land M."/>
            <person name="Hauser L."/>
            <person name="Kyrpides N."/>
            <person name="Kim E."/>
            <person name="Magnuson T."/>
            <person name="Richardson P."/>
        </authorList>
    </citation>
    <scope>NUCLEOTIDE SEQUENCE [LARGE SCALE GENOMIC DNA]</scope>
    <source>
        <strain>JF-5</strain>
    </source>
</reference>
<sequence>MTLFNLTDLASTLPRNARLIGLDPGSKIIGIALSDVGRRLATPYGAMKRGKLAEAAATILDIARKEGAAALIIGLPLSMDGSIGPAAQAARDWAHAIARETGLPVAMMDERLSSAAVNRALIEADVTRAKRAGRVDAAAASYMLQGALDLLNEPRPEE</sequence>
<dbReference type="EC" id="3.1.-.-" evidence="1"/>
<dbReference type="EMBL" id="CP000697">
    <property type="protein sequence ID" value="ABQ30092.1"/>
    <property type="molecule type" value="Genomic_DNA"/>
</dbReference>
<dbReference type="SMR" id="A5FWW0"/>
<dbReference type="STRING" id="349163.Acry_0873"/>
<dbReference type="KEGG" id="acr:Acry_0873"/>
<dbReference type="eggNOG" id="COG0816">
    <property type="taxonomic scope" value="Bacteria"/>
</dbReference>
<dbReference type="HOGENOM" id="CLU_098240_1_1_5"/>
<dbReference type="Proteomes" id="UP000000245">
    <property type="component" value="Chromosome"/>
</dbReference>
<dbReference type="GO" id="GO:0005829">
    <property type="term" value="C:cytosol"/>
    <property type="evidence" value="ECO:0007669"/>
    <property type="project" value="TreeGrafter"/>
</dbReference>
<dbReference type="GO" id="GO:0004518">
    <property type="term" value="F:nuclease activity"/>
    <property type="evidence" value="ECO:0007669"/>
    <property type="project" value="UniProtKB-KW"/>
</dbReference>
<dbReference type="GO" id="GO:0000967">
    <property type="term" value="P:rRNA 5'-end processing"/>
    <property type="evidence" value="ECO:0007669"/>
    <property type="project" value="UniProtKB-UniRule"/>
</dbReference>
<dbReference type="CDD" id="cd16964">
    <property type="entry name" value="YqgF"/>
    <property type="match status" value="1"/>
</dbReference>
<dbReference type="Gene3D" id="3.30.420.140">
    <property type="entry name" value="YqgF/RNase H-like domain"/>
    <property type="match status" value="1"/>
</dbReference>
<dbReference type="HAMAP" id="MF_00651">
    <property type="entry name" value="Nuclease_YqgF"/>
    <property type="match status" value="1"/>
</dbReference>
<dbReference type="InterPro" id="IPR012337">
    <property type="entry name" value="RNaseH-like_sf"/>
</dbReference>
<dbReference type="InterPro" id="IPR005227">
    <property type="entry name" value="YqgF"/>
</dbReference>
<dbReference type="InterPro" id="IPR006641">
    <property type="entry name" value="YqgF/RNaseH-like_dom"/>
</dbReference>
<dbReference type="InterPro" id="IPR037027">
    <property type="entry name" value="YqgF/RNaseH-like_dom_sf"/>
</dbReference>
<dbReference type="NCBIfam" id="TIGR00250">
    <property type="entry name" value="RNAse_H_YqgF"/>
    <property type="match status" value="1"/>
</dbReference>
<dbReference type="PANTHER" id="PTHR33317">
    <property type="entry name" value="POLYNUCLEOTIDYL TRANSFERASE, RIBONUCLEASE H-LIKE SUPERFAMILY PROTEIN"/>
    <property type="match status" value="1"/>
</dbReference>
<dbReference type="PANTHER" id="PTHR33317:SF4">
    <property type="entry name" value="POLYNUCLEOTIDYL TRANSFERASE, RIBONUCLEASE H-LIKE SUPERFAMILY PROTEIN"/>
    <property type="match status" value="1"/>
</dbReference>
<dbReference type="Pfam" id="PF03652">
    <property type="entry name" value="RuvX"/>
    <property type="match status" value="1"/>
</dbReference>
<dbReference type="SMART" id="SM00732">
    <property type="entry name" value="YqgFc"/>
    <property type="match status" value="1"/>
</dbReference>
<dbReference type="SUPFAM" id="SSF53098">
    <property type="entry name" value="Ribonuclease H-like"/>
    <property type="match status" value="1"/>
</dbReference>
<evidence type="ECO:0000255" key="1">
    <source>
        <dbReference type="HAMAP-Rule" id="MF_00651"/>
    </source>
</evidence>
<gene>
    <name type="ordered locus">Acry_0873</name>
</gene>
<accession>A5FWW0</accession>
<name>YQGF_ACICJ</name>
<feature type="chain" id="PRO_1000061476" description="Putative pre-16S rRNA nuclease">
    <location>
        <begin position="1"/>
        <end position="158"/>
    </location>
</feature>
<protein>
    <recommendedName>
        <fullName evidence="1">Putative pre-16S rRNA nuclease</fullName>
        <ecNumber evidence="1">3.1.-.-</ecNumber>
    </recommendedName>
</protein>
<keyword id="KW-0963">Cytoplasm</keyword>
<keyword id="KW-0378">Hydrolase</keyword>
<keyword id="KW-0540">Nuclease</keyword>
<keyword id="KW-1185">Reference proteome</keyword>
<keyword id="KW-0690">Ribosome biogenesis</keyword>
<proteinExistence type="inferred from homology"/>
<organism>
    <name type="scientific">Acidiphilium cryptum (strain JF-5)</name>
    <dbReference type="NCBI Taxonomy" id="349163"/>
    <lineage>
        <taxon>Bacteria</taxon>
        <taxon>Pseudomonadati</taxon>
        <taxon>Pseudomonadota</taxon>
        <taxon>Alphaproteobacteria</taxon>
        <taxon>Acetobacterales</taxon>
        <taxon>Acidocellaceae</taxon>
        <taxon>Acidiphilium</taxon>
    </lineage>
</organism>
<comment type="function">
    <text evidence="1">Could be a nuclease involved in processing of the 5'-end of pre-16S rRNA.</text>
</comment>
<comment type="subcellular location">
    <subcellularLocation>
        <location evidence="1">Cytoplasm</location>
    </subcellularLocation>
</comment>
<comment type="similarity">
    <text evidence="1">Belongs to the YqgF nuclease family.</text>
</comment>